<proteinExistence type="inferred from homology"/>
<gene>
    <name evidence="1" type="primary">nrdR</name>
    <name type="ordered locus">STER_0356</name>
</gene>
<name>NRDR_STRTD</name>
<comment type="function">
    <text evidence="1">Negatively regulates transcription of bacterial ribonucleotide reductase nrd genes and operons by binding to NrdR-boxes.</text>
</comment>
<comment type="cofactor">
    <cofactor evidence="1">
        <name>Zn(2+)</name>
        <dbReference type="ChEBI" id="CHEBI:29105"/>
    </cofactor>
    <text evidence="1">Binds 1 zinc ion.</text>
</comment>
<comment type="similarity">
    <text evidence="1">Belongs to the NrdR family.</text>
</comment>
<protein>
    <recommendedName>
        <fullName evidence="1">Transcriptional repressor NrdR</fullName>
    </recommendedName>
</protein>
<feature type="chain" id="PRO_1000080848" description="Transcriptional repressor NrdR">
    <location>
        <begin position="1"/>
        <end position="159"/>
    </location>
</feature>
<feature type="domain" description="ATP-cone" evidence="1">
    <location>
        <begin position="49"/>
        <end position="139"/>
    </location>
</feature>
<feature type="zinc finger region" evidence="1">
    <location>
        <begin position="3"/>
        <end position="34"/>
    </location>
</feature>
<feature type="region of interest" description="Disordered" evidence="2">
    <location>
        <begin position="1"/>
        <end position="21"/>
    </location>
</feature>
<keyword id="KW-0067">ATP-binding</keyword>
<keyword id="KW-0238">DNA-binding</keyword>
<keyword id="KW-0479">Metal-binding</keyword>
<keyword id="KW-0547">Nucleotide-binding</keyword>
<keyword id="KW-0678">Repressor</keyword>
<keyword id="KW-0804">Transcription</keyword>
<keyword id="KW-0805">Transcription regulation</keyword>
<keyword id="KW-0862">Zinc</keyword>
<keyword id="KW-0863">Zinc-finger</keyword>
<organism>
    <name type="scientific">Streptococcus thermophilus (strain ATCC BAA-491 / LMD-9)</name>
    <dbReference type="NCBI Taxonomy" id="322159"/>
    <lineage>
        <taxon>Bacteria</taxon>
        <taxon>Bacillati</taxon>
        <taxon>Bacillota</taxon>
        <taxon>Bacilli</taxon>
        <taxon>Lactobacillales</taxon>
        <taxon>Streptococcaceae</taxon>
        <taxon>Streptococcus</taxon>
    </lineage>
</organism>
<evidence type="ECO:0000255" key="1">
    <source>
        <dbReference type="HAMAP-Rule" id="MF_00440"/>
    </source>
</evidence>
<evidence type="ECO:0000256" key="2">
    <source>
        <dbReference type="SAM" id="MobiDB-lite"/>
    </source>
</evidence>
<accession>Q03MB4</accession>
<reference key="1">
    <citation type="journal article" date="2006" name="Proc. Natl. Acad. Sci. U.S.A.">
        <title>Comparative genomics of the lactic acid bacteria.</title>
        <authorList>
            <person name="Makarova K.S."/>
            <person name="Slesarev A."/>
            <person name="Wolf Y.I."/>
            <person name="Sorokin A."/>
            <person name="Mirkin B."/>
            <person name="Koonin E.V."/>
            <person name="Pavlov A."/>
            <person name="Pavlova N."/>
            <person name="Karamychev V."/>
            <person name="Polouchine N."/>
            <person name="Shakhova V."/>
            <person name="Grigoriev I."/>
            <person name="Lou Y."/>
            <person name="Rohksar D."/>
            <person name="Lucas S."/>
            <person name="Huang K."/>
            <person name="Goodstein D.M."/>
            <person name="Hawkins T."/>
            <person name="Plengvidhya V."/>
            <person name="Welker D."/>
            <person name="Hughes J."/>
            <person name="Goh Y."/>
            <person name="Benson A."/>
            <person name="Baldwin K."/>
            <person name="Lee J.-H."/>
            <person name="Diaz-Muniz I."/>
            <person name="Dosti B."/>
            <person name="Smeianov V."/>
            <person name="Wechter W."/>
            <person name="Barabote R."/>
            <person name="Lorca G."/>
            <person name="Altermann E."/>
            <person name="Barrangou R."/>
            <person name="Ganesan B."/>
            <person name="Xie Y."/>
            <person name="Rawsthorne H."/>
            <person name="Tamir D."/>
            <person name="Parker C."/>
            <person name="Breidt F."/>
            <person name="Broadbent J.R."/>
            <person name="Hutkins R."/>
            <person name="O'Sullivan D."/>
            <person name="Steele J."/>
            <person name="Unlu G."/>
            <person name="Saier M.H. Jr."/>
            <person name="Klaenhammer T."/>
            <person name="Richardson P."/>
            <person name="Kozyavkin S."/>
            <person name="Weimer B.C."/>
            <person name="Mills D.A."/>
        </authorList>
    </citation>
    <scope>NUCLEOTIDE SEQUENCE [LARGE SCALE GENOMIC DNA]</scope>
    <source>
        <strain>ATCC BAA-491 / LMD-9</strain>
    </source>
</reference>
<sequence length="159" mass="18504">MRCPKCQHNKSNVIDSRQAEDGNTIRRRRECDACHARFTTFERVEEVPLLVVKKDGTREQFSRDKIFNGISMSAQKRPVSSEDIENAITRIEKNIRRNHDGEVDSEVIGNLVMKELADLDEITYVRFASVYRSFKDVDEIEELLQEITKTVRAKKESKK</sequence>
<dbReference type="EMBL" id="CP000419">
    <property type="protein sequence ID" value="ABJ65658.1"/>
    <property type="molecule type" value="Genomic_DNA"/>
</dbReference>
<dbReference type="RefSeq" id="WP_011680738.1">
    <property type="nucleotide sequence ID" value="NC_008532.1"/>
</dbReference>
<dbReference type="SMR" id="Q03MB4"/>
<dbReference type="KEGG" id="ste:STER_0356"/>
<dbReference type="HOGENOM" id="CLU_108412_0_0_9"/>
<dbReference type="GO" id="GO:0005524">
    <property type="term" value="F:ATP binding"/>
    <property type="evidence" value="ECO:0007669"/>
    <property type="project" value="UniProtKB-KW"/>
</dbReference>
<dbReference type="GO" id="GO:0003677">
    <property type="term" value="F:DNA binding"/>
    <property type="evidence" value="ECO:0007669"/>
    <property type="project" value="UniProtKB-KW"/>
</dbReference>
<dbReference type="GO" id="GO:0008270">
    <property type="term" value="F:zinc ion binding"/>
    <property type="evidence" value="ECO:0007669"/>
    <property type="project" value="UniProtKB-UniRule"/>
</dbReference>
<dbReference type="GO" id="GO:0045892">
    <property type="term" value="P:negative regulation of DNA-templated transcription"/>
    <property type="evidence" value="ECO:0007669"/>
    <property type="project" value="UniProtKB-UniRule"/>
</dbReference>
<dbReference type="HAMAP" id="MF_00440">
    <property type="entry name" value="NrdR"/>
    <property type="match status" value="1"/>
</dbReference>
<dbReference type="InterPro" id="IPR005144">
    <property type="entry name" value="ATP-cone_dom"/>
</dbReference>
<dbReference type="InterPro" id="IPR055173">
    <property type="entry name" value="NrdR-like_N"/>
</dbReference>
<dbReference type="InterPro" id="IPR003796">
    <property type="entry name" value="RNR_NrdR-like"/>
</dbReference>
<dbReference type="NCBIfam" id="TIGR00244">
    <property type="entry name" value="transcriptional regulator NrdR"/>
    <property type="match status" value="1"/>
</dbReference>
<dbReference type="PANTHER" id="PTHR30455">
    <property type="entry name" value="TRANSCRIPTIONAL REPRESSOR NRDR"/>
    <property type="match status" value="1"/>
</dbReference>
<dbReference type="PANTHER" id="PTHR30455:SF2">
    <property type="entry name" value="TRANSCRIPTIONAL REPRESSOR NRDR"/>
    <property type="match status" value="1"/>
</dbReference>
<dbReference type="Pfam" id="PF03477">
    <property type="entry name" value="ATP-cone"/>
    <property type="match status" value="1"/>
</dbReference>
<dbReference type="Pfam" id="PF22811">
    <property type="entry name" value="Zn_ribbon_NrdR"/>
    <property type="match status" value="1"/>
</dbReference>
<dbReference type="PROSITE" id="PS51161">
    <property type="entry name" value="ATP_CONE"/>
    <property type="match status" value="1"/>
</dbReference>